<sequence length="1065" mass="122466">MAVHAPYNHAPPPTQEINGQKPTLAPAITLERPADCINRGQYPAFYIICGYLNRLRADAPHKKYELLTRIFGNWREKVGPDLYPLIRLLLPDKDRERPVYNLKESMLARCYIDILSLEKHSEAAQRLIKWKQPAGNSPNPTGDFAKVCYNEIKARSTVEEGQLSVEAVNMLLDKLAVGKMKQKDYVPILKAINMQCTAEEQEWIIRIILKDLHISIRERGVLSAFHPDAIDLYNVCSDLKRVCWTLYDPGFRLNKNETHLELFHSFLPQLCGRMNDASLENIAKAIGAPKEFIMEEKLDGERIQLHMRGNGAQWFYCSRKAKDYTYLYGAHPGEGSLTRYIATAFQDNVRNVILDGEMMVWDPVVERYLAFGTLKSAALAFSLVKVFDILFLNDHCLSRKRLSERKRLLRSGKIFKNIENYKGRLEFVDEKRGKNAKDIREYLERVVETKGEGLVVKKTDVIYQTNSRGYDWIKVKPEYSDQMGENLEVLVLGGWWGKGGRSGKISRLLCGLREQAFDDGTLQDFLFNRFWNELLGLRVDFVSHLMHLRSMRCSPTHLSQCRNKHKKHWRPFDRSNPPPFMKLGPVGLDDKPDVYIEPENSFVIEVKASEIVPAGYGIGFTLRFPRCKYIYYDKNSRDYALDDECLWTVGQGFFYKTRKLIKRTDFMDLFSRPKRSYDDSQGPGNFRGQKLSDADVETSIFSDMTFSDLEALVHKHGADFTQAQLSDLSAIVISPDQKNPLVRAQIRHGVNVIKPEWVFESIARRTALPFLKEFLVFASEEAQDGRYYNKTLEQYDKVSFVRDRTGGALVDEDGDADVEDEIMDGEDKDEIDVEESRESKNRRMAREDLKEKESNRTLEQKKLQEAWGLRSRASPGDSDSEPEEEMSLKEESDTDSERSRGLRAIYEDEEDGENDSHESDVGVNGDDYRAVPLSGLNDKEEGLMGESPEAMHYDEDRIFYHLAFYIDTAKNAAVNGLESSSPSFDTQERLVKVEKLLIENGGRVARSISDPKLTHIIMDDEDSRRYVELTRKTAMPKRKHIVTPKWVEDCVDEETLLDEDLYKPK</sequence>
<gene>
    <name type="primary">LIG4</name>
    <name type="ordered locus">CNBK2570</name>
</gene>
<dbReference type="EC" id="6.5.1.1" evidence="2"/>
<dbReference type="EMBL" id="AAEY01000052">
    <property type="protein sequence ID" value="EAL18239.1"/>
    <property type="status" value="ALT_SEQ"/>
    <property type="molecule type" value="Genomic_DNA"/>
</dbReference>
<dbReference type="RefSeq" id="XP_772886.1">
    <property type="nucleotide sequence ID" value="XM_767793.1"/>
</dbReference>
<dbReference type="SMR" id="P0CN09"/>
<dbReference type="GeneID" id="4938955"/>
<dbReference type="KEGG" id="cnb:CNBK2570"/>
<dbReference type="HOGENOM" id="CLU_004844_1_0_1"/>
<dbReference type="OrthoDB" id="5230at5206"/>
<dbReference type="GO" id="GO:0032807">
    <property type="term" value="C:DNA ligase IV complex"/>
    <property type="evidence" value="ECO:0007669"/>
    <property type="project" value="TreeGrafter"/>
</dbReference>
<dbReference type="GO" id="GO:0005524">
    <property type="term" value="F:ATP binding"/>
    <property type="evidence" value="ECO:0007669"/>
    <property type="project" value="UniProtKB-KW"/>
</dbReference>
<dbReference type="GO" id="GO:0003677">
    <property type="term" value="F:DNA binding"/>
    <property type="evidence" value="ECO:0007669"/>
    <property type="project" value="InterPro"/>
</dbReference>
<dbReference type="GO" id="GO:0003910">
    <property type="term" value="F:DNA ligase (ATP) activity"/>
    <property type="evidence" value="ECO:0000250"/>
    <property type="project" value="UniProtKB"/>
</dbReference>
<dbReference type="GO" id="GO:0046872">
    <property type="term" value="F:metal ion binding"/>
    <property type="evidence" value="ECO:0007669"/>
    <property type="project" value="UniProtKB-KW"/>
</dbReference>
<dbReference type="GO" id="GO:0071897">
    <property type="term" value="P:DNA biosynthetic process"/>
    <property type="evidence" value="ECO:0007669"/>
    <property type="project" value="InterPro"/>
</dbReference>
<dbReference type="GO" id="GO:0006310">
    <property type="term" value="P:DNA recombination"/>
    <property type="evidence" value="ECO:0007669"/>
    <property type="project" value="UniProtKB-KW"/>
</dbReference>
<dbReference type="GO" id="GO:0097680">
    <property type="term" value="P:double-strand break repair via classical nonhomologous end joining"/>
    <property type="evidence" value="ECO:0000250"/>
    <property type="project" value="UniProtKB"/>
</dbReference>
<dbReference type="GO" id="GO:0006297">
    <property type="term" value="P:nucleotide-excision repair, DNA gap filling"/>
    <property type="evidence" value="ECO:0007669"/>
    <property type="project" value="TreeGrafter"/>
</dbReference>
<dbReference type="CDD" id="cd07903">
    <property type="entry name" value="Adenylation_DNA_ligase_IV"/>
    <property type="match status" value="1"/>
</dbReference>
<dbReference type="CDD" id="cd18435">
    <property type="entry name" value="BRCT_BRC1_like_rpt1"/>
    <property type="match status" value="1"/>
</dbReference>
<dbReference type="CDD" id="cd17722">
    <property type="entry name" value="BRCT_DNA_ligase_IV_rpt1"/>
    <property type="match status" value="1"/>
</dbReference>
<dbReference type="FunFam" id="1.10.3260.10:FF:000012">
    <property type="entry name" value="DNA ligase"/>
    <property type="match status" value="1"/>
</dbReference>
<dbReference type="Gene3D" id="3.40.50.10190">
    <property type="entry name" value="BRCT domain"/>
    <property type="match status" value="2"/>
</dbReference>
<dbReference type="Gene3D" id="1.10.3260.10">
    <property type="entry name" value="DNA ligase, ATP-dependent, N-terminal domain"/>
    <property type="match status" value="1"/>
</dbReference>
<dbReference type="Gene3D" id="3.30.470.30">
    <property type="entry name" value="DNA ligase/mRNA capping enzyme"/>
    <property type="match status" value="1"/>
</dbReference>
<dbReference type="Gene3D" id="2.40.50.140">
    <property type="entry name" value="Nucleic acid-binding proteins"/>
    <property type="match status" value="1"/>
</dbReference>
<dbReference type="InterPro" id="IPR044125">
    <property type="entry name" value="Adenylation_DNA_ligase_IV"/>
</dbReference>
<dbReference type="InterPro" id="IPR001357">
    <property type="entry name" value="BRCT_dom"/>
</dbReference>
<dbReference type="InterPro" id="IPR036420">
    <property type="entry name" value="BRCT_dom_sf"/>
</dbReference>
<dbReference type="InterPro" id="IPR000977">
    <property type="entry name" value="DNA_ligase_ATP-dep"/>
</dbReference>
<dbReference type="InterPro" id="IPR012310">
    <property type="entry name" value="DNA_ligase_ATP-dep_cent"/>
</dbReference>
<dbReference type="InterPro" id="IPR016059">
    <property type="entry name" value="DNA_ligase_ATP-dep_CS"/>
</dbReference>
<dbReference type="InterPro" id="IPR012308">
    <property type="entry name" value="DNA_ligase_ATP-dep_N"/>
</dbReference>
<dbReference type="InterPro" id="IPR036599">
    <property type="entry name" value="DNA_ligase_N_sf"/>
</dbReference>
<dbReference type="InterPro" id="IPR029710">
    <property type="entry name" value="LIG4"/>
</dbReference>
<dbReference type="InterPro" id="IPR012340">
    <property type="entry name" value="NA-bd_OB-fold"/>
</dbReference>
<dbReference type="NCBIfam" id="TIGR00574">
    <property type="entry name" value="dnl1"/>
    <property type="match status" value="1"/>
</dbReference>
<dbReference type="PANTHER" id="PTHR45997">
    <property type="entry name" value="DNA LIGASE 4"/>
    <property type="match status" value="1"/>
</dbReference>
<dbReference type="PANTHER" id="PTHR45997:SF1">
    <property type="entry name" value="DNA LIGASE 4"/>
    <property type="match status" value="1"/>
</dbReference>
<dbReference type="Pfam" id="PF16589">
    <property type="entry name" value="BRCT_2"/>
    <property type="match status" value="2"/>
</dbReference>
<dbReference type="Pfam" id="PF01068">
    <property type="entry name" value="DNA_ligase_A_M"/>
    <property type="match status" value="1"/>
</dbReference>
<dbReference type="Pfam" id="PF04675">
    <property type="entry name" value="DNA_ligase_A_N"/>
    <property type="match status" value="1"/>
</dbReference>
<dbReference type="SMART" id="SM00292">
    <property type="entry name" value="BRCT"/>
    <property type="match status" value="2"/>
</dbReference>
<dbReference type="SUPFAM" id="SSF52113">
    <property type="entry name" value="BRCT domain"/>
    <property type="match status" value="2"/>
</dbReference>
<dbReference type="SUPFAM" id="SSF56091">
    <property type="entry name" value="DNA ligase/mRNA capping enzyme, catalytic domain"/>
    <property type="match status" value="1"/>
</dbReference>
<dbReference type="SUPFAM" id="SSF50249">
    <property type="entry name" value="Nucleic acid-binding proteins"/>
    <property type="match status" value="1"/>
</dbReference>
<dbReference type="PROSITE" id="PS50172">
    <property type="entry name" value="BRCT"/>
    <property type="match status" value="2"/>
</dbReference>
<dbReference type="PROSITE" id="PS00697">
    <property type="entry name" value="DNA_LIGASE_A1"/>
    <property type="match status" value="1"/>
</dbReference>
<dbReference type="PROSITE" id="PS00333">
    <property type="entry name" value="DNA_LIGASE_A2"/>
    <property type="match status" value="1"/>
</dbReference>
<dbReference type="PROSITE" id="PS50160">
    <property type="entry name" value="DNA_LIGASE_A3"/>
    <property type="match status" value="1"/>
</dbReference>
<organism>
    <name type="scientific">Cryptococcus neoformans var. neoformans serotype D (strain B-3501A)</name>
    <name type="common">Filobasidiella neoformans</name>
    <dbReference type="NCBI Taxonomy" id="283643"/>
    <lineage>
        <taxon>Eukaryota</taxon>
        <taxon>Fungi</taxon>
        <taxon>Dikarya</taxon>
        <taxon>Basidiomycota</taxon>
        <taxon>Agaricomycotina</taxon>
        <taxon>Tremellomycetes</taxon>
        <taxon>Tremellales</taxon>
        <taxon>Cryptococcaceae</taxon>
        <taxon>Cryptococcus</taxon>
        <taxon>Cryptococcus neoformans species complex</taxon>
    </lineage>
</organism>
<protein>
    <recommendedName>
        <fullName>DNA ligase 4</fullName>
        <ecNumber evidence="2">6.5.1.1</ecNumber>
    </recommendedName>
    <alternativeName>
        <fullName>DNA ligase IV</fullName>
    </alternativeName>
    <alternativeName>
        <fullName>Polydeoxyribonucleotide synthase [ATP] 4</fullName>
    </alternativeName>
</protein>
<name>DNLI4_CRYNB</name>
<proteinExistence type="inferred from homology"/>
<keyword id="KW-0067">ATP-binding</keyword>
<keyword id="KW-0227">DNA damage</keyword>
<keyword id="KW-0233">DNA recombination</keyword>
<keyword id="KW-0234">DNA repair</keyword>
<keyword id="KW-0436">Ligase</keyword>
<keyword id="KW-0460">Magnesium</keyword>
<keyword id="KW-0479">Metal-binding</keyword>
<keyword id="KW-0547">Nucleotide-binding</keyword>
<keyword id="KW-0539">Nucleus</keyword>
<keyword id="KW-0677">Repeat</keyword>
<feature type="chain" id="PRO_0000410058" description="DNA ligase 4">
    <location>
        <begin position="1"/>
        <end position="1065"/>
    </location>
</feature>
<feature type="domain" description="BRCT 1" evidence="4">
    <location>
        <begin position="696"/>
        <end position="775"/>
    </location>
</feature>
<feature type="domain" description="BRCT 2" evidence="4">
    <location>
        <begin position="954"/>
        <end position="1064"/>
    </location>
</feature>
<feature type="region of interest" description="Disordered" evidence="6">
    <location>
        <begin position="1"/>
        <end position="20"/>
    </location>
</feature>
<feature type="region of interest" description="Disordered" evidence="6">
    <location>
        <begin position="825"/>
        <end position="928"/>
    </location>
</feature>
<feature type="compositionally biased region" description="Basic and acidic residues" evidence="6">
    <location>
        <begin position="834"/>
        <end position="864"/>
    </location>
</feature>
<feature type="compositionally biased region" description="Basic and acidic residues" evidence="6">
    <location>
        <begin position="886"/>
        <end position="900"/>
    </location>
</feature>
<feature type="active site" description="N6-AMP-lysine intermediate" evidence="5">
    <location>
        <position position="297"/>
    </location>
</feature>
<feature type="binding site" evidence="1">
    <location>
        <position position="295"/>
    </location>
    <ligand>
        <name>ATP</name>
        <dbReference type="ChEBI" id="CHEBI:30616"/>
    </ligand>
</feature>
<feature type="binding site" evidence="1">
    <location>
        <position position="297"/>
    </location>
    <ligand>
        <name>ATP</name>
        <dbReference type="ChEBI" id="CHEBI:30616"/>
    </ligand>
</feature>
<feature type="binding site" evidence="1">
    <location>
        <position position="298"/>
    </location>
    <ligand>
        <name>ATP</name>
        <dbReference type="ChEBI" id="CHEBI:30616"/>
    </ligand>
</feature>
<feature type="binding site" evidence="1">
    <location>
        <position position="302"/>
    </location>
    <ligand>
        <name>ATP</name>
        <dbReference type="ChEBI" id="CHEBI:30616"/>
    </ligand>
</feature>
<feature type="binding site" evidence="1">
    <location>
        <position position="357"/>
    </location>
    <ligand>
        <name>ATP</name>
        <dbReference type="ChEBI" id="CHEBI:30616"/>
    </ligand>
</feature>
<feature type="binding site" evidence="3">
    <location>
        <position position="357"/>
    </location>
    <ligand>
        <name>Mg(2+)</name>
        <dbReference type="ChEBI" id="CHEBI:18420"/>
        <label>1</label>
    </ligand>
</feature>
<feature type="binding site" evidence="1">
    <location>
        <position position="387"/>
    </location>
    <ligand>
        <name>ATP</name>
        <dbReference type="ChEBI" id="CHEBI:30616"/>
    </ligand>
</feature>
<feature type="binding site" evidence="1">
    <location>
        <position position="452"/>
    </location>
    <ligand>
        <name>ATP</name>
        <dbReference type="ChEBI" id="CHEBI:30616"/>
    </ligand>
</feature>
<feature type="binding site" evidence="3">
    <location>
        <position position="452"/>
    </location>
    <ligand>
        <name>Mg(2+)</name>
        <dbReference type="ChEBI" id="CHEBI:18420"/>
        <label>2</label>
    </ligand>
</feature>
<feature type="binding site" evidence="1">
    <location>
        <position position="457"/>
    </location>
    <ligand>
        <name>ATP</name>
        <dbReference type="ChEBI" id="CHEBI:30616"/>
    </ligand>
</feature>
<feature type="binding site" evidence="1">
    <location>
        <position position="474"/>
    </location>
    <ligand>
        <name>ATP</name>
        <dbReference type="ChEBI" id="CHEBI:30616"/>
    </ligand>
</feature>
<feature type="binding site" evidence="1">
    <location>
        <position position="476"/>
    </location>
    <ligand>
        <name>ATP</name>
        <dbReference type="ChEBI" id="CHEBI:30616"/>
    </ligand>
</feature>
<accession>P0CN09</accession>
<accession>Q55JS6</accession>
<accession>Q5K9S5</accession>
<evidence type="ECO:0000250" key="1">
    <source>
        <dbReference type="UniProtKB" id="P49917"/>
    </source>
</evidence>
<evidence type="ECO:0000250" key="2">
    <source>
        <dbReference type="UniProtKB" id="Q08387"/>
    </source>
</evidence>
<evidence type="ECO:0000255" key="3"/>
<evidence type="ECO:0000255" key="4">
    <source>
        <dbReference type="PROSITE-ProRule" id="PRU00033"/>
    </source>
</evidence>
<evidence type="ECO:0000255" key="5">
    <source>
        <dbReference type="PROSITE-ProRule" id="PRU10135"/>
    </source>
</evidence>
<evidence type="ECO:0000256" key="6">
    <source>
        <dbReference type="SAM" id="MobiDB-lite"/>
    </source>
</evidence>
<evidence type="ECO:0000305" key="7"/>
<comment type="function">
    <text evidence="2">DNA ligase involved in DNA non-homologous end joining (NHEJ); required for double-strand break (DSB) repair.</text>
</comment>
<comment type="catalytic activity">
    <reaction evidence="5">
        <text>ATP + (deoxyribonucleotide)n-3'-hydroxyl + 5'-phospho-(deoxyribonucleotide)m = (deoxyribonucleotide)n+m + AMP + diphosphate.</text>
        <dbReference type="EC" id="6.5.1.1"/>
    </reaction>
</comment>
<comment type="cofactor">
    <cofactor evidence="1">
        <name>Mg(2+)</name>
        <dbReference type="ChEBI" id="CHEBI:18420"/>
    </cofactor>
</comment>
<comment type="subcellular location">
    <subcellularLocation>
        <location evidence="2">Nucleus</location>
    </subcellularLocation>
</comment>
<comment type="similarity">
    <text evidence="7">Belongs to the ATP-dependent DNA ligase family.</text>
</comment>
<comment type="sequence caution" evidence="7">
    <conflict type="erroneous gene model prediction">
        <sequence resource="EMBL-CDS" id="EAL18239"/>
    </conflict>
</comment>
<reference key="1">
    <citation type="journal article" date="2005" name="Science">
        <title>The genome of the basidiomycetous yeast and human pathogen Cryptococcus neoformans.</title>
        <authorList>
            <person name="Loftus B.J."/>
            <person name="Fung E."/>
            <person name="Roncaglia P."/>
            <person name="Rowley D."/>
            <person name="Amedeo P."/>
            <person name="Bruno D."/>
            <person name="Vamathevan J."/>
            <person name="Miranda M."/>
            <person name="Anderson I.J."/>
            <person name="Fraser J.A."/>
            <person name="Allen J.E."/>
            <person name="Bosdet I.E."/>
            <person name="Brent M.R."/>
            <person name="Chiu R."/>
            <person name="Doering T.L."/>
            <person name="Donlin M.J."/>
            <person name="D'Souza C.A."/>
            <person name="Fox D.S."/>
            <person name="Grinberg V."/>
            <person name="Fu J."/>
            <person name="Fukushima M."/>
            <person name="Haas B.J."/>
            <person name="Huang J.C."/>
            <person name="Janbon G."/>
            <person name="Jones S.J.M."/>
            <person name="Koo H.L."/>
            <person name="Krzywinski M.I."/>
            <person name="Kwon-Chung K.J."/>
            <person name="Lengeler K.B."/>
            <person name="Maiti R."/>
            <person name="Marra M.A."/>
            <person name="Marra R.E."/>
            <person name="Mathewson C.A."/>
            <person name="Mitchell T.G."/>
            <person name="Pertea M."/>
            <person name="Riggs F.R."/>
            <person name="Salzberg S.L."/>
            <person name="Schein J.E."/>
            <person name="Shvartsbeyn A."/>
            <person name="Shin H."/>
            <person name="Shumway M."/>
            <person name="Specht C.A."/>
            <person name="Suh B.B."/>
            <person name="Tenney A."/>
            <person name="Utterback T.R."/>
            <person name="Wickes B.L."/>
            <person name="Wortman J.R."/>
            <person name="Wye N.H."/>
            <person name="Kronstad J.W."/>
            <person name="Lodge J.K."/>
            <person name="Heitman J."/>
            <person name="Davis R.W."/>
            <person name="Fraser C.M."/>
            <person name="Hyman R.W."/>
        </authorList>
    </citation>
    <scope>NUCLEOTIDE SEQUENCE [LARGE SCALE GENOMIC DNA]</scope>
    <source>
        <strain>B-3501A</strain>
    </source>
</reference>